<reference key="1">
    <citation type="journal article" date="2008" name="PLoS ONE">
        <title>Genetic basis of virulence attenuation revealed by comparative genomic analysis of Mycobacterium tuberculosis strain H37Ra versus H37Rv.</title>
        <authorList>
            <person name="Zheng H."/>
            <person name="Lu L."/>
            <person name="Wang B."/>
            <person name="Pu S."/>
            <person name="Zhang X."/>
            <person name="Zhu G."/>
            <person name="Shi W."/>
            <person name="Zhang L."/>
            <person name="Wang H."/>
            <person name="Wang S."/>
            <person name="Zhao G."/>
            <person name="Zhang Y."/>
        </authorList>
    </citation>
    <scope>NUCLEOTIDE SEQUENCE [LARGE SCALE GENOMIC DNA]</scope>
    <source>
        <strain>ATCC 25177 / H37Ra</strain>
    </source>
</reference>
<keyword id="KW-0963">Cytoplasm</keyword>
<keyword id="KW-0489">Methyltransferase</keyword>
<keyword id="KW-1185">Reference proteome</keyword>
<keyword id="KW-0949">S-adenosyl-L-methionine</keyword>
<keyword id="KW-0808">Transferase</keyword>
<keyword id="KW-0819">tRNA processing</keyword>
<gene>
    <name evidence="1" type="primary">trmD</name>
    <name type="ordered locus">MRA_2931</name>
</gene>
<dbReference type="EC" id="2.1.1.228" evidence="1"/>
<dbReference type="EMBL" id="CP000611">
    <property type="protein sequence ID" value="ABQ74711.1"/>
    <property type="molecule type" value="Genomic_DNA"/>
</dbReference>
<dbReference type="RefSeq" id="WP_003414722.1">
    <property type="nucleotide sequence ID" value="NZ_CP016972.1"/>
</dbReference>
<dbReference type="SMR" id="A5U6R1"/>
<dbReference type="KEGG" id="mra:MRA_2931"/>
<dbReference type="eggNOG" id="COG0336">
    <property type="taxonomic scope" value="Bacteria"/>
</dbReference>
<dbReference type="HOGENOM" id="CLU_047363_0_0_11"/>
<dbReference type="Proteomes" id="UP000001988">
    <property type="component" value="Chromosome"/>
</dbReference>
<dbReference type="GO" id="GO:0005829">
    <property type="term" value="C:cytosol"/>
    <property type="evidence" value="ECO:0007669"/>
    <property type="project" value="TreeGrafter"/>
</dbReference>
<dbReference type="GO" id="GO:0052906">
    <property type="term" value="F:tRNA (guanine(37)-N1)-methyltransferase activity"/>
    <property type="evidence" value="ECO:0007669"/>
    <property type="project" value="UniProtKB-UniRule"/>
</dbReference>
<dbReference type="GO" id="GO:0002939">
    <property type="term" value="P:tRNA N1-guanine methylation"/>
    <property type="evidence" value="ECO:0007669"/>
    <property type="project" value="TreeGrafter"/>
</dbReference>
<dbReference type="CDD" id="cd18080">
    <property type="entry name" value="TrmD-like"/>
    <property type="match status" value="1"/>
</dbReference>
<dbReference type="FunFam" id="1.10.1270.20:FF:000004">
    <property type="entry name" value="tRNA (guanine-N(1)-)-methyltransferase"/>
    <property type="match status" value="1"/>
</dbReference>
<dbReference type="FunFam" id="3.40.1280.10:FF:000001">
    <property type="entry name" value="tRNA (guanine-N(1)-)-methyltransferase"/>
    <property type="match status" value="1"/>
</dbReference>
<dbReference type="Gene3D" id="3.40.1280.10">
    <property type="match status" value="1"/>
</dbReference>
<dbReference type="Gene3D" id="1.10.1270.20">
    <property type="entry name" value="tRNA(m1g37)methyltransferase, domain 2"/>
    <property type="match status" value="1"/>
</dbReference>
<dbReference type="HAMAP" id="MF_00605">
    <property type="entry name" value="TrmD"/>
    <property type="match status" value="1"/>
</dbReference>
<dbReference type="InterPro" id="IPR029028">
    <property type="entry name" value="Alpha/beta_knot_MTases"/>
</dbReference>
<dbReference type="InterPro" id="IPR023148">
    <property type="entry name" value="tRNA_m1G_MeTrfase_C_sf"/>
</dbReference>
<dbReference type="InterPro" id="IPR002649">
    <property type="entry name" value="tRNA_m1G_MeTrfase_TrmD"/>
</dbReference>
<dbReference type="InterPro" id="IPR029026">
    <property type="entry name" value="tRNA_m1G_MTases_N"/>
</dbReference>
<dbReference type="InterPro" id="IPR016009">
    <property type="entry name" value="tRNA_MeTrfase_TRMD/TRM10"/>
</dbReference>
<dbReference type="NCBIfam" id="NF000648">
    <property type="entry name" value="PRK00026.1"/>
    <property type="match status" value="1"/>
</dbReference>
<dbReference type="NCBIfam" id="TIGR00088">
    <property type="entry name" value="trmD"/>
    <property type="match status" value="1"/>
</dbReference>
<dbReference type="PANTHER" id="PTHR46417">
    <property type="entry name" value="TRNA (GUANINE-N(1)-)-METHYLTRANSFERASE"/>
    <property type="match status" value="1"/>
</dbReference>
<dbReference type="PANTHER" id="PTHR46417:SF1">
    <property type="entry name" value="TRNA (GUANINE-N(1)-)-METHYLTRANSFERASE"/>
    <property type="match status" value="1"/>
</dbReference>
<dbReference type="Pfam" id="PF01746">
    <property type="entry name" value="tRNA_m1G_MT"/>
    <property type="match status" value="1"/>
</dbReference>
<dbReference type="PIRSF" id="PIRSF000386">
    <property type="entry name" value="tRNA_mtase"/>
    <property type="match status" value="1"/>
</dbReference>
<dbReference type="SUPFAM" id="SSF75217">
    <property type="entry name" value="alpha/beta knot"/>
    <property type="match status" value="1"/>
</dbReference>
<comment type="function">
    <text evidence="1">Specifically methylates guanosine-37 in various tRNAs.</text>
</comment>
<comment type="catalytic activity">
    <reaction evidence="1">
        <text>guanosine(37) in tRNA + S-adenosyl-L-methionine = N(1)-methylguanosine(37) in tRNA + S-adenosyl-L-homocysteine + H(+)</text>
        <dbReference type="Rhea" id="RHEA:36899"/>
        <dbReference type="Rhea" id="RHEA-COMP:10145"/>
        <dbReference type="Rhea" id="RHEA-COMP:10147"/>
        <dbReference type="ChEBI" id="CHEBI:15378"/>
        <dbReference type="ChEBI" id="CHEBI:57856"/>
        <dbReference type="ChEBI" id="CHEBI:59789"/>
        <dbReference type="ChEBI" id="CHEBI:73542"/>
        <dbReference type="ChEBI" id="CHEBI:74269"/>
        <dbReference type="EC" id="2.1.1.228"/>
    </reaction>
</comment>
<comment type="subunit">
    <text evidence="1">Homodimer.</text>
</comment>
<comment type="subcellular location">
    <subcellularLocation>
        <location evidence="1">Cytoplasm</location>
    </subcellularLocation>
</comment>
<comment type="similarity">
    <text evidence="1">Belongs to the RNA methyltransferase TrmD family.</text>
</comment>
<name>TRMD_MYCTA</name>
<accession>A5U6R1</accession>
<protein>
    <recommendedName>
        <fullName evidence="1">tRNA (guanine-N(1)-)-methyltransferase</fullName>
        <ecNumber evidence="1">2.1.1.228</ecNumber>
    </recommendedName>
    <alternativeName>
        <fullName evidence="1">M1G-methyltransferase</fullName>
    </alternativeName>
    <alternativeName>
        <fullName evidence="1">tRNA [GM37] methyltransferase</fullName>
    </alternativeName>
</protein>
<organism>
    <name type="scientific">Mycobacterium tuberculosis (strain ATCC 25177 / H37Ra)</name>
    <dbReference type="NCBI Taxonomy" id="419947"/>
    <lineage>
        <taxon>Bacteria</taxon>
        <taxon>Bacillati</taxon>
        <taxon>Actinomycetota</taxon>
        <taxon>Actinomycetes</taxon>
        <taxon>Mycobacteriales</taxon>
        <taxon>Mycobacteriaceae</taxon>
        <taxon>Mycobacterium</taxon>
        <taxon>Mycobacterium tuberculosis complex</taxon>
    </lineage>
</organism>
<evidence type="ECO:0000255" key="1">
    <source>
        <dbReference type="HAMAP-Rule" id="MF_00605"/>
    </source>
</evidence>
<proteinExistence type="inferred from homology"/>
<sequence>MRIDIVTIFPACLDPLRQSLPGKAIESGLVDLNVHDLRRWTHDVHHSVDDAPYGGGPGMVMKAPVWGEALDEICSSETLLIVPTPAGVLFTQATAQRWTTESHLVFACGRYEGIDQRVVQDAARRMRVEEVSIGDYVLPGGESAAVVMVEAVLRLLAGVLGNPASHQDDSHSTGLDGLLEGPSYTRPASWRGLDVPEVLLSGDHARIAAWRREVSLQRTRERRPDLSHPD</sequence>
<feature type="chain" id="PRO_1000006498" description="tRNA (guanine-N(1)-)-methyltransferase">
    <location>
        <begin position="1"/>
        <end position="230"/>
    </location>
</feature>
<feature type="binding site" evidence="1">
    <location>
        <position position="109"/>
    </location>
    <ligand>
        <name>S-adenosyl-L-methionine</name>
        <dbReference type="ChEBI" id="CHEBI:59789"/>
    </ligand>
</feature>
<feature type="binding site" evidence="1">
    <location>
        <begin position="133"/>
        <end position="138"/>
    </location>
    <ligand>
        <name>S-adenosyl-L-methionine</name>
        <dbReference type="ChEBI" id="CHEBI:59789"/>
    </ligand>
</feature>